<reference key="1">
    <citation type="journal article" date="2000" name="Curr. Biol.">
        <title>A novel Dictyostelium RasGEF is required for normal endocytosis, cell motility and multicellular development.</title>
        <authorList>
            <person name="Wilkins A."/>
            <person name="Chubb J.R."/>
            <person name="Insall R.H."/>
        </authorList>
    </citation>
    <scope>NUCLEOTIDE SEQUENCE [MRNA]</scope>
    <scope>FUNCTION</scope>
    <scope>DEVELOPMENTAL STAGE</scope>
    <scope>SUBCELLULAR LOCATION</scope>
    <scope>DISRUPTION PHENOTYPE</scope>
    <source>
        <strain>AX3</strain>
    </source>
</reference>
<reference key="2">
    <citation type="journal article" date="2005" name="Genome Biol.">
        <title>The Dictyostelium genome encodes numerous RasGEFs with multiple biological roles.</title>
        <authorList>
            <person name="Wilkins A."/>
            <person name="Szafranski K."/>
            <person name="Fraser D.J."/>
            <person name="Bakthavatsalam D."/>
            <person name="Mueller R."/>
            <person name="Fisher P.R."/>
            <person name="Gloeckner G."/>
            <person name="Eichinger L."/>
            <person name="Noegel A.A."/>
            <person name="Insall R.H."/>
        </authorList>
    </citation>
    <scope>NUCLEOTIDE SEQUENCE [GENOMIC DNA]</scope>
    <scope>DEVELOPMENTAL STAGE</scope>
    <scope>DISRUPTION PHENOTYPE</scope>
    <source>
        <strain>AX4</strain>
    </source>
</reference>
<reference key="3">
    <citation type="journal article" date="2005" name="Nature">
        <title>The genome of the social amoeba Dictyostelium discoideum.</title>
        <authorList>
            <person name="Eichinger L."/>
            <person name="Pachebat J.A."/>
            <person name="Gloeckner G."/>
            <person name="Rajandream M.A."/>
            <person name="Sucgang R."/>
            <person name="Berriman M."/>
            <person name="Song J."/>
            <person name="Olsen R."/>
            <person name="Szafranski K."/>
            <person name="Xu Q."/>
            <person name="Tunggal B."/>
            <person name="Kummerfeld S."/>
            <person name="Madera M."/>
            <person name="Konfortov B.A."/>
            <person name="Rivero F."/>
            <person name="Bankier A.T."/>
            <person name="Lehmann R."/>
            <person name="Hamlin N."/>
            <person name="Davies R."/>
            <person name="Gaudet P."/>
            <person name="Fey P."/>
            <person name="Pilcher K."/>
            <person name="Chen G."/>
            <person name="Saunders D."/>
            <person name="Sodergren E.J."/>
            <person name="Davis P."/>
            <person name="Kerhornou A."/>
            <person name="Nie X."/>
            <person name="Hall N."/>
            <person name="Anjard C."/>
            <person name="Hemphill L."/>
            <person name="Bason N."/>
            <person name="Farbrother P."/>
            <person name="Desany B."/>
            <person name="Just E."/>
            <person name="Morio T."/>
            <person name="Rost R."/>
            <person name="Churcher C.M."/>
            <person name="Cooper J."/>
            <person name="Haydock S."/>
            <person name="van Driessche N."/>
            <person name="Cronin A."/>
            <person name="Goodhead I."/>
            <person name="Muzny D.M."/>
            <person name="Mourier T."/>
            <person name="Pain A."/>
            <person name="Lu M."/>
            <person name="Harper D."/>
            <person name="Lindsay R."/>
            <person name="Hauser H."/>
            <person name="James K.D."/>
            <person name="Quiles M."/>
            <person name="Madan Babu M."/>
            <person name="Saito T."/>
            <person name="Buchrieser C."/>
            <person name="Wardroper A."/>
            <person name="Felder M."/>
            <person name="Thangavelu M."/>
            <person name="Johnson D."/>
            <person name="Knights A."/>
            <person name="Loulseged H."/>
            <person name="Mungall K.L."/>
            <person name="Oliver K."/>
            <person name="Price C."/>
            <person name="Quail M.A."/>
            <person name="Urushihara H."/>
            <person name="Hernandez J."/>
            <person name="Rabbinowitsch E."/>
            <person name="Steffen D."/>
            <person name="Sanders M."/>
            <person name="Ma J."/>
            <person name="Kohara Y."/>
            <person name="Sharp S."/>
            <person name="Simmonds M.N."/>
            <person name="Spiegler S."/>
            <person name="Tivey A."/>
            <person name="Sugano S."/>
            <person name="White B."/>
            <person name="Walker D."/>
            <person name="Woodward J.R."/>
            <person name="Winckler T."/>
            <person name="Tanaka Y."/>
            <person name="Shaulsky G."/>
            <person name="Schleicher M."/>
            <person name="Weinstock G.M."/>
            <person name="Rosenthal A."/>
            <person name="Cox E.C."/>
            <person name="Chisholm R.L."/>
            <person name="Gibbs R.A."/>
            <person name="Loomis W.F."/>
            <person name="Platzer M."/>
            <person name="Kay R.R."/>
            <person name="Williams J.G."/>
            <person name="Dear P.H."/>
            <person name="Noegel A.A."/>
            <person name="Barrell B.G."/>
            <person name="Kuspa A."/>
        </authorList>
    </citation>
    <scope>NUCLEOTIDE SEQUENCE [LARGE SCALE GENOMIC DNA]</scope>
    <source>
        <strain>AX4</strain>
    </source>
</reference>
<reference key="4">
    <citation type="journal article" date="2003" name="BMC Genet.">
        <title>Parasexual genetics of Dictyostelium gene disruptions: identification of a ras pathway using diploids.</title>
        <authorList>
            <person name="King J."/>
            <person name="Insall R.H."/>
        </authorList>
    </citation>
    <scope>DISRUPTION PHENOTYPE</scope>
</reference>
<reference key="5">
    <citation type="journal article" date="2005" name="Dev. Growth Differ.">
        <title>Gamete fusion and cytokinesis preceding zygote establishment in the sexual process of Dictyostelium discoideum.</title>
        <authorList>
            <person name="Ishida K."/>
            <person name="Hata T."/>
            <person name="Urushihara H."/>
        </authorList>
    </citation>
    <scope>DEVELOPMENTAL STAGE</scope>
</reference>
<organism>
    <name type="scientific">Dictyostelium discoideum</name>
    <name type="common">Social amoeba</name>
    <dbReference type="NCBI Taxonomy" id="44689"/>
    <lineage>
        <taxon>Eukaryota</taxon>
        <taxon>Amoebozoa</taxon>
        <taxon>Evosea</taxon>
        <taxon>Eumycetozoa</taxon>
        <taxon>Dictyostelia</taxon>
        <taxon>Dictyosteliales</taxon>
        <taxon>Dictyosteliaceae</taxon>
        <taxon>Dictyostelium</taxon>
    </lineage>
</organism>
<proteinExistence type="evidence at transcript level"/>
<gene>
    <name type="primary">gefB</name>
    <name type="synonym">rasGEFB</name>
    <name type="ORF">DDB_G0269222</name>
</gene>
<protein>
    <recommendedName>
        <fullName>Ras guanine nucleotide exchange factor B</fullName>
    </recommendedName>
    <alternativeName>
        <fullName>RasGEF domain-containing protein B</fullName>
    </alternativeName>
</protein>
<name>GEFB_DICDI</name>
<comment type="function">
    <text evidence="1 6">Promotes the exchange of Ras-bound GDP by GTP (By similarity). Involved in phagocytosis, fluid-phase endocytosis, regulation of macropinocytosis and control of cell movement.</text>
</comment>
<comment type="subcellular location">
    <subcellularLocation>
        <location evidence="6">Cytoplasm</location>
    </subcellularLocation>
</comment>
<comment type="developmental stage">
    <text evidence="6 8 9">Expressed during development; especially between 8 and 14 hours of development. Expression reaches a maximum at around 16 hours, when the cell aggregation was near completion and phagocytosis started.</text>
</comment>
<comment type="disruption phenotype">
    <text evidence="6 7 9">Grows relatively normally on bacterial plates, but is unable to grow in axenic culture due to a loss of fluid-phase endocytosis. The morphology of growing cells appears flattened, elongate, polarized and dominated by a single large lamella. Able to aggregate but not to form slugs, and does make highly aberrant fruiting bodies. Cells move unusually rapidly and have lost the ability to perform macropinocytosis. Crowns, the sites of macropinocytosis, are replaced by polarized lamellipodia. The majority of F-actin is concentrated in a single large lamella, at the leading edge of the cell. Cells lacking rasS and gefB show that the cell speed of unstimulated, bacterially-grown double mutants is around three times the speed of wild type cells; comparable with both rasS- and gefB- parents and reveal a serious defect in phagocytosis.</text>
</comment>
<feature type="chain" id="PRO_0000384460" description="Ras guanine nucleotide exchange factor B">
    <location>
        <begin position="1"/>
        <end position="1529"/>
    </location>
</feature>
<feature type="domain" description="N-terminal Ras-GEF" evidence="3">
    <location>
        <begin position="1075"/>
        <end position="1205"/>
    </location>
</feature>
<feature type="domain" description="Ras-GEF" evidence="4">
    <location>
        <begin position="1282"/>
        <end position="1517"/>
    </location>
</feature>
<feature type="region of interest" description="Disordered" evidence="5">
    <location>
        <begin position="290"/>
        <end position="357"/>
    </location>
</feature>
<feature type="region of interest" description="Disordered" evidence="5">
    <location>
        <begin position="576"/>
        <end position="600"/>
    </location>
</feature>
<feature type="region of interest" description="Disordered" evidence="5">
    <location>
        <begin position="680"/>
        <end position="724"/>
    </location>
</feature>
<feature type="region of interest" description="Disordered" evidence="5">
    <location>
        <begin position="847"/>
        <end position="948"/>
    </location>
</feature>
<feature type="region of interest" description="Disordered" evidence="5">
    <location>
        <begin position="1168"/>
        <end position="1206"/>
    </location>
</feature>
<feature type="coiled-coil region" evidence="2">
    <location>
        <begin position="135"/>
        <end position="186"/>
    </location>
</feature>
<feature type="coiled-coil region" evidence="2">
    <location>
        <begin position="722"/>
        <end position="798"/>
    </location>
</feature>
<feature type="coiled-coil region" evidence="2">
    <location>
        <begin position="871"/>
        <end position="898"/>
    </location>
</feature>
<feature type="compositionally biased region" description="Low complexity" evidence="5">
    <location>
        <begin position="576"/>
        <end position="591"/>
    </location>
</feature>
<feature type="compositionally biased region" description="Low complexity" evidence="5">
    <location>
        <begin position="683"/>
        <end position="724"/>
    </location>
</feature>
<feature type="compositionally biased region" description="Low complexity" evidence="5">
    <location>
        <begin position="853"/>
        <end position="887"/>
    </location>
</feature>
<feature type="compositionally biased region" description="Basic and acidic residues" evidence="5">
    <location>
        <begin position="888"/>
        <end position="898"/>
    </location>
</feature>
<feature type="compositionally biased region" description="Low complexity" evidence="5">
    <location>
        <begin position="906"/>
        <end position="916"/>
    </location>
</feature>
<feature type="compositionally biased region" description="Low complexity" evidence="5">
    <location>
        <begin position="924"/>
        <end position="940"/>
    </location>
</feature>
<feature type="compositionally biased region" description="Low complexity" evidence="5">
    <location>
        <begin position="1168"/>
        <end position="1187"/>
    </location>
</feature>
<feature type="compositionally biased region" description="Low complexity" evidence="5">
    <location>
        <begin position="1197"/>
        <end position="1206"/>
    </location>
</feature>
<feature type="sequence conflict" description="In Ref. 1; AAG29138." evidence="10" ref="1">
    <original>L</original>
    <variation>I</variation>
    <location>
        <position position="145"/>
    </location>
</feature>
<feature type="sequence conflict" description="In Ref. 1; AAG29138." evidence="10" ref="1">
    <original>D</original>
    <variation>G</variation>
    <location>
        <position position="1073"/>
    </location>
</feature>
<dbReference type="EMBL" id="AF275723">
    <property type="protein sequence ID" value="AAG29138.1"/>
    <property type="molecule type" value="mRNA"/>
</dbReference>
<dbReference type="EMBL" id="AY160091">
    <property type="protein sequence ID" value="AAN46871.1"/>
    <property type="molecule type" value="Genomic_DNA"/>
</dbReference>
<dbReference type="EMBL" id="AAFI02000005">
    <property type="protein sequence ID" value="EAL71961.1"/>
    <property type="molecule type" value="Genomic_DNA"/>
</dbReference>
<dbReference type="RefSeq" id="XP_646271.1">
    <property type="nucleotide sequence ID" value="XM_641179.1"/>
</dbReference>
<dbReference type="SMR" id="Q8IS21"/>
<dbReference type="FunCoup" id="Q8IS21">
    <property type="interactions" value="357"/>
</dbReference>
<dbReference type="STRING" id="44689.Q8IS21"/>
<dbReference type="PaxDb" id="44689-DDB0191498"/>
<dbReference type="EnsemblProtists" id="EAL71961">
    <property type="protein sequence ID" value="EAL71961"/>
    <property type="gene ID" value="DDB_G0269222"/>
</dbReference>
<dbReference type="GeneID" id="8617227"/>
<dbReference type="KEGG" id="ddi:DDB_G0269222"/>
<dbReference type="dictyBase" id="DDB_G0269222">
    <property type="gene designation" value="gefB"/>
</dbReference>
<dbReference type="VEuPathDB" id="AmoebaDB:DDB_G0269222"/>
<dbReference type="eggNOG" id="KOG3417">
    <property type="taxonomic scope" value="Eukaryota"/>
</dbReference>
<dbReference type="HOGENOM" id="CLU_247361_0_0_1"/>
<dbReference type="InParanoid" id="Q8IS21"/>
<dbReference type="OMA" id="KICYALY"/>
<dbReference type="Reactome" id="R-DDI-193648">
    <property type="pathway name" value="NRAGE signals death through JNK"/>
</dbReference>
<dbReference type="Reactome" id="R-DDI-9013148">
    <property type="pathway name" value="CDC42 GTPase cycle"/>
</dbReference>
<dbReference type="Reactome" id="R-DDI-9013149">
    <property type="pathway name" value="RAC1 GTPase cycle"/>
</dbReference>
<dbReference type="PRO" id="PR:Q8IS21"/>
<dbReference type="Proteomes" id="UP000002195">
    <property type="component" value="Chromosome 1"/>
</dbReference>
<dbReference type="GO" id="GO:0005737">
    <property type="term" value="C:cytoplasm"/>
    <property type="evidence" value="ECO:0000304"/>
    <property type="project" value="dictyBase"/>
</dbReference>
<dbReference type="GO" id="GO:0005886">
    <property type="term" value="C:plasma membrane"/>
    <property type="evidence" value="ECO:0000314"/>
    <property type="project" value="dictyBase"/>
</dbReference>
<dbReference type="GO" id="GO:0031143">
    <property type="term" value="C:pseudopodium"/>
    <property type="evidence" value="ECO:0000314"/>
    <property type="project" value="dictyBase"/>
</dbReference>
<dbReference type="GO" id="GO:0005085">
    <property type="term" value="F:guanyl-nucleotide exchange factor activity"/>
    <property type="evidence" value="ECO:0000316"/>
    <property type="project" value="dictyBase"/>
</dbReference>
<dbReference type="GO" id="GO:0007015">
    <property type="term" value="P:actin filament organization"/>
    <property type="evidence" value="ECO:0000315"/>
    <property type="project" value="dictyBase"/>
</dbReference>
<dbReference type="GO" id="GO:0031152">
    <property type="term" value="P:aggregation involved in sorocarp development"/>
    <property type="evidence" value="ECO:0000315"/>
    <property type="project" value="dictyBase"/>
</dbReference>
<dbReference type="GO" id="GO:0032060">
    <property type="term" value="P:bleb assembly"/>
    <property type="evidence" value="ECO:0000315"/>
    <property type="project" value="dictyBase"/>
</dbReference>
<dbReference type="GO" id="GO:0048870">
    <property type="term" value="P:cell motility"/>
    <property type="evidence" value="ECO:0000315"/>
    <property type="project" value="dictyBase"/>
</dbReference>
<dbReference type="GO" id="GO:0030866">
    <property type="term" value="P:cortical actin cytoskeleton organization"/>
    <property type="evidence" value="ECO:0000315"/>
    <property type="project" value="dictyBase"/>
</dbReference>
<dbReference type="GO" id="GO:0030336">
    <property type="term" value="P:negative regulation of cell migration"/>
    <property type="evidence" value="ECO:0000315"/>
    <property type="project" value="dictyBase"/>
</dbReference>
<dbReference type="GO" id="GO:0006909">
    <property type="term" value="P:phagocytosis"/>
    <property type="evidence" value="ECO:0000315"/>
    <property type="project" value="dictyBase"/>
</dbReference>
<dbReference type="GO" id="GO:1905303">
    <property type="term" value="P:positive regulation of macropinocytosis"/>
    <property type="evidence" value="ECO:0000315"/>
    <property type="project" value="dictyBase"/>
</dbReference>
<dbReference type="GO" id="GO:0050766">
    <property type="term" value="P:positive regulation of phagocytosis"/>
    <property type="evidence" value="ECO:0000315"/>
    <property type="project" value="dictyBase"/>
</dbReference>
<dbReference type="GO" id="GO:0051897">
    <property type="term" value="P:positive regulation of phosphatidylinositol 3-kinase/protein kinase B signal transduction"/>
    <property type="evidence" value="ECO:0000315"/>
    <property type="project" value="dictyBase"/>
</dbReference>
<dbReference type="GO" id="GO:0007265">
    <property type="term" value="P:Ras protein signal transduction"/>
    <property type="evidence" value="ECO:0000250"/>
    <property type="project" value="dictyBase"/>
</dbReference>
<dbReference type="GO" id="GO:0106070">
    <property type="term" value="P:regulation of adenylate cyclase-activating G protein-coupled receptor signaling pathway"/>
    <property type="evidence" value="ECO:0000315"/>
    <property type="project" value="dictyBase"/>
</dbReference>
<dbReference type="GO" id="GO:0022604">
    <property type="term" value="P:regulation of cell morphogenesis"/>
    <property type="evidence" value="ECO:0000315"/>
    <property type="project" value="dictyBase"/>
</dbReference>
<dbReference type="GO" id="GO:2000145">
    <property type="term" value="P:regulation of cell motility"/>
    <property type="evidence" value="ECO:0000316"/>
    <property type="project" value="dictyBase"/>
</dbReference>
<dbReference type="GO" id="GO:0046686">
    <property type="term" value="P:response to cadmium ion"/>
    <property type="evidence" value="ECO:0007007"/>
    <property type="project" value="dictyBase"/>
</dbReference>
<dbReference type="GO" id="GO:0019953">
    <property type="term" value="P:sexual reproduction"/>
    <property type="evidence" value="ECO:0000270"/>
    <property type="project" value="dictyBase"/>
</dbReference>
<dbReference type="CDD" id="cd00155">
    <property type="entry name" value="RasGEF"/>
    <property type="match status" value="1"/>
</dbReference>
<dbReference type="CDD" id="cd06224">
    <property type="entry name" value="REM"/>
    <property type="match status" value="1"/>
</dbReference>
<dbReference type="FunFam" id="1.10.840.10:FF:000009">
    <property type="entry name" value="rap guanine nucleotide exchange factor 1"/>
    <property type="match status" value="1"/>
</dbReference>
<dbReference type="FunFam" id="1.20.870.10:FF:000030">
    <property type="entry name" value="Ras guanine nucleotide exchange factor A"/>
    <property type="match status" value="1"/>
</dbReference>
<dbReference type="Gene3D" id="1.10.840.10">
    <property type="entry name" value="Ras guanine-nucleotide exchange factors catalytic domain"/>
    <property type="match status" value="1"/>
</dbReference>
<dbReference type="Gene3D" id="1.20.870.10">
    <property type="entry name" value="Son of sevenless (SoS) protein Chain: S domain 1"/>
    <property type="match status" value="1"/>
</dbReference>
<dbReference type="InterPro" id="IPR008937">
    <property type="entry name" value="Ras-like_GEF"/>
</dbReference>
<dbReference type="InterPro" id="IPR000651">
    <property type="entry name" value="Ras-like_Gua-exchang_fac_N"/>
</dbReference>
<dbReference type="InterPro" id="IPR019804">
    <property type="entry name" value="Ras_G-nucl-exch_fac_CS"/>
</dbReference>
<dbReference type="InterPro" id="IPR023578">
    <property type="entry name" value="Ras_GEF_dom_sf"/>
</dbReference>
<dbReference type="InterPro" id="IPR001895">
    <property type="entry name" value="RASGEF_cat_dom"/>
</dbReference>
<dbReference type="InterPro" id="IPR036964">
    <property type="entry name" value="RASGEF_cat_dom_sf"/>
</dbReference>
<dbReference type="PANTHER" id="PTHR23113">
    <property type="entry name" value="GUANINE NUCLEOTIDE EXCHANGE FACTOR"/>
    <property type="match status" value="1"/>
</dbReference>
<dbReference type="PANTHER" id="PTHR23113:SF360">
    <property type="entry name" value="RAS GUANINE NUCLEOTIDE EXCHANGE FACTOR B"/>
    <property type="match status" value="1"/>
</dbReference>
<dbReference type="Pfam" id="PF00617">
    <property type="entry name" value="RasGEF"/>
    <property type="match status" value="1"/>
</dbReference>
<dbReference type="Pfam" id="PF00618">
    <property type="entry name" value="RasGEF_N"/>
    <property type="match status" value="1"/>
</dbReference>
<dbReference type="SMART" id="SM00147">
    <property type="entry name" value="RasGEF"/>
    <property type="match status" value="1"/>
</dbReference>
<dbReference type="SMART" id="SM00229">
    <property type="entry name" value="RasGEFN"/>
    <property type="match status" value="1"/>
</dbReference>
<dbReference type="SUPFAM" id="SSF48366">
    <property type="entry name" value="Ras GEF"/>
    <property type="match status" value="1"/>
</dbReference>
<dbReference type="PROSITE" id="PS00720">
    <property type="entry name" value="RASGEF"/>
    <property type="match status" value="1"/>
</dbReference>
<dbReference type="PROSITE" id="PS50009">
    <property type="entry name" value="RASGEF_CAT"/>
    <property type="match status" value="1"/>
</dbReference>
<dbReference type="PROSITE" id="PS50212">
    <property type="entry name" value="RASGEF_NTER"/>
    <property type="match status" value="1"/>
</dbReference>
<evidence type="ECO:0000250" key="1"/>
<evidence type="ECO:0000255" key="2"/>
<evidence type="ECO:0000255" key="3">
    <source>
        <dbReference type="PROSITE-ProRule" id="PRU00135"/>
    </source>
</evidence>
<evidence type="ECO:0000255" key="4">
    <source>
        <dbReference type="PROSITE-ProRule" id="PRU00168"/>
    </source>
</evidence>
<evidence type="ECO:0000256" key="5">
    <source>
        <dbReference type="SAM" id="MobiDB-lite"/>
    </source>
</evidence>
<evidence type="ECO:0000269" key="6">
    <source>
    </source>
</evidence>
<evidence type="ECO:0000269" key="7">
    <source>
    </source>
</evidence>
<evidence type="ECO:0000269" key="8">
    <source>
    </source>
</evidence>
<evidence type="ECO:0000269" key="9">
    <source>
    </source>
</evidence>
<evidence type="ECO:0000305" key="10"/>
<keyword id="KW-0175">Coiled coil</keyword>
<keyword id="KW-0963">Cytoplasm</keyword>
<keyword id="KW-0254">Endocytosis</keyword>
<keyword id="KW-0344">Guanine-nucleotide releasing factor</keyword>
<keyword id="KW-0581">Phagocytosis</keyword>
<keyword id="KW-1185">Reference proteome</keyword>
<accession>Q8IS21</accession>
<accession>Q55D60</accession>
<accession>Q9GQC2</accession>
<sequence length="1529" mass="174053">MVVILWGWNENRFNTLDQVISFDFIEENKKLYLKILENEKQQKIYNISNLIGRRMDNYRDNNNNNGNGSNINNNGIIINSSMGSQYFNLNKGIIIVESDNETFLIEEIDYLGKFPILKQFIKCEEFIGISTLEIISNIEKQLSNLVNLKSNTTEQTDRKYKTNLIDFKESIIQLEKDCKNLLKQSNLINPSIKYSVVKSVKFLLKEIKFEFYHGDINIKRIELFQQLKKFLKIHFWNNPNLILNSGSNIDMTDSNDSISSEEINSPNDLNLSLSSFPSISSPSNSSYNNINTLTFSNNNNNNNNNSNNNNNNNNNNNNNNSIINSNNNNNSNNNSNISNSSNNNNNNSNNSNNISINVSKTGNNSVINSPTQSSSCYIDCDDTMSNYTDCTNTTNTNSTTTTTTTTTTYGNNLNVYNNNNNNNTNNNNNNVPYKKPALKMMKSPSFKIQLIQEVYLEIMDQCKKIQNYLYELLDTYLTDEEYINNNNNNNNKDISILFENNTSYCIAQEIFISLIKNSNDFLYQVQLIDLTDTRKKSKELSEVSNQLFYSTQQLFPSISDHLDFIEMDIFTNNNTTTTTTTTTTTTNTTTNPSNTIKSSHSSLLSSSYSSSKDDDIVLTINKVLSKLDTFSKEYTKLIGNNLSSNYYVDSGNNNESVSSPKCGLFLSHSLSTDSPMTYVKRNTSSGSSASTSSYTTPVSSSASLSFSSSTQTPSSAASQHHIQQILQQQQQQQQQQQQQQQQQQPQQIQSQSQQQHQQQQQQQQQQQQQQQQQQQQQQQQQQQQIQSQSQQQQQLNRKPHYSSISPTSMLVYNATGGKFGVVNQNNNSAESTPTFQLNTMDILNSLMGKEGQNSNTNNANNPNNNNNNNNNNNNNNNNNNNNNNNNENKNENKNETNKSGHNYNNSSTSTLSSSTTIGDLANVSSTNSPNSSTPNLLLPPHQFHNHNREYNHSHHHLLSSSSNNVMINNRSIGKSFSTGNFSQPQPIMPSNGIGGSGGGGLGTTLSVGNGGIVGGLQSRSSSFEENQLQYAIESFMEVYNHLTSKDKVDTSIWLEEEKEDINVYYINNTNIDDKFYRSIKYASLNQLILKLTCESNTELRFTKTFITTYRSFTTGDIFLMKLIQRYFTPNLKNIVPYQFVQKIQIPIQLRVLNVLRLWIEQYPSDFQQPPQITTQSTQPIQNSTTQPQPQPQPQQPQPQLQQSTNLQNSTIQQPSLFKMLTAFLNSTRRNGHGQYSDLILKKFKQQKQKDRLQLPIINNGQGIPKAKIFWMKYSTEFIFSQSSTDIAEQLTLLDFDSYKSIEEIELLNQAWSKPDQKTNTPNIASMVNRFNSFSSFVSWAILRENDIKQRSKMMLKMIKICYALYKLSNFNGLLAGLSGLMASGVYRLNHTKSLISKQYQKKFDFLCKFLDTKKSHKVYRDIIHSTCPPLIPYLGIYLTDLTFIEDGNQDEIKGLINFKKREMIFNTILEIQQYQQQGYTIKPKPSVLGFLCELPHMSDKKKFEDDTYEQSILLEPKNSTKLEVMNAKK</sequence>